<sequence>MAGVGDAAAPGEGGGGGVDGPQRDGRGEAEQPGGSGGQGPPPAPQLTETLGFYESDRRRERRRGRTELSLLRFLSAELTRGYFLEHNEAKYTERRERVYTCLRIPRELEKLMVFGIFLCLDAFLYVFTLLPLRVFLALFRLLTLPCYGLRDRRLLQPAQVCDILKGVILVICYFMMHYVDYSMMYHLIRGQSVIKLYIIYNMLEVADRLFSSFGQDILDALYWTATEPKERKRAHIGVIPHFFMAVLYVFLHAILIMVQATTLNVAFNSHNKSLLTIMMSNNFVEIKGSVFKKFEKNNLFQMSNSDIKERFTNYVLLLIVCLRNMEQFSWNPDHLWVLFPDVCMVIASEIAVDIVKHAFITKFNDITADVYSEYRASLAFDLVSSRQKNAYTDYSDSVARRMGFIPLPLAVLLIRVVTSSIKVQGILSYACVILFYFGLISLKVLNSIVLLGKSCQYVKEAKMEEKLSNPPATCTPGKPSSKSQNKCKPSQGLSTEENLSASITKQPIHQKENIIPLLVTSNSDQFLTTPDGDEKDITQDNSELKHRSSKKDLLEIDRFTICGNRID</sequence>
<accession>Q6NXT6</accession>
<accession>Q8N2S3</accession>
<accession>Q9NZK9</accession>
<proteinExistence type="evidence at protein level"/>
<keyword id="KW-0007">Acetylation</keyword>
<keyword id="KW-0025">Alternative splicing</keyword>
<keyword id="KW-0966">Cell projection</keyword>
<keyword id="KW-0891">Chondrogenesis</keyword>
<keyword id="KW-1186">Ciliopathy</keyword>
<keyword id="KW-0969">Cilium</keyword>
<keyword id="KW-0970">Cilium biogenesis/degradation</keyword>
<keyword id="KW-0963">Cytoplasm</keyword>
<keyword id="KW-0206">Cytoskeleton</keyword>
<keyword id="KW-0217">Developmental protein</keyword>
<keyword id="KW-0221">Differentiation</keyword>
<keyword id="KW-0225">Disease variant</keyword>
<keyword id="KW-0945">Host-virus interaction</keyword>
<keyword id="KW-0472">Membrane</keyword>
<keyword id="KW-0892">Osteogenesis</keyword>
<keyword id="KW-0597">Phosphoprotein</keyword>
<keyword id="KW-1267">Proteomics identification</keyword>
<keyword id="KW-0675">Receptor</keyword>
<keyword id="KW-1185">Reference proteome</keyword>
<keyword id="KW-0812">Transmembrane</keyword>
<keyword id="KW-1133">Transmembrane helix</keyword>
<organism>
    <name type="scientific">Homo sapiens</name>
    <name type="common">Human</name>
    <dbReference type="NCBI Taxonomy" id="9606"/>
    <lineage>
        <taxon>Eukaryota</taxon>
        <taxon>Metazoa</taxon>
        <taxon>Chordata</taxon>
        <taxon>Craniata</taxon>
        <taxon>Vertebrata</taxon>
        <taxon>Euteleostomi</taxon>
        <taxon>Mammalia</taxon>
        <taxon>Eutheria</taxon>
        <taxon>Euarchontoglires</taxon>
        <taxon>Primates</taxon>
        <taxon>Haplorrhini</taxon>
        <taxon>Catarrhini</taxon>
        <taxon>Hominidae</taxon>
        <taxon>Homo</taxon>
    </lineage>
</organism>
<evidence type="ECO:0000250" key="1">
    <source>
        <dbReference type="UniProtKB" id="A2BIE7"/>
    </source>
</evidence>
<evidence type="ECO:0000250" key="2">
    <source>
        <dbReference type="UniProtKB" id="Q4VBD2"/>
    </source>
</evidence>
<evidence type="ECO:0000255" key="3"/>
<evidence type="ECO:0000256" key="4">
    <source>
        <dbReference type="SAM" id="MobiDB-lite"/>
    </source>
</evidence>
<evidence type="ECO:0000269" key="5">
    <source>
    </source>
</evidence>
<evidence type="ECO:0000269" key="6">
    <source>
    </source>
</evidence>
<evidence type="ECO:0000303" key="7">
    <source>
    </source>
</evidence>
<evidence type="ECO:0000305" key="8"/>
<evidence type="ECO:0007744" key="9">
    <source>
    </source>
</evidence>
<evidence type="ECO:0007744" key="10">
    <source>
    </source>
</evidence>
<reference key="1">
    <citation type="journal article" date="2005" name="DNA Res.">
        <title>Signal sequence and keyword trap in silico for selection of full-length human cDNAs encoding secretion or membrane proteins from oligo-capped cDNA libraries.</title>
        <authorList>
            <person name="Otsuki T."/>
            <person name="Ota T."/>
            <person name="Nishikawa T."/>
            <person name="Hayashi K."/>
            <person name="Suzuki Y."/>
            <person name="Yamamoto J."/>
            <person name="Wakamatsu A."/>
            <person name="Kimura K."/>
            <person name="Sakamoto K."/>
            <person name="Hatano N."/>
            <person name="Kawai Y."/>
            <person name="Ishii S."/>
            <person name="Saito K."/>
            <person name="Kojima S."/>
            <person name="Sugiyama T."/>
            <person name="Ono T."/>
            <person name="Okano K."/>
            <person name="Yoshikawa Y."/>
            <person name="Aotsuka S."/>
            <person name="Sasaki N."/>
            <person name="Hattori A."/>
            <person name="Okumura K."/>
            <person name="Nagai K."/>
            <person name="Sugano S."/>
            <person name="Isogai T."/>
        </authorList>
    </citation>
    <scope>NUCLEOTIDE SEQUENCE [LARGE SCALE MRNA] (ISOFORM 2)</scope>
    <source>
        <tissue>Embryo</tissue>
    </source>
</reference>
<reference key="2">
    <citation type="submission" date="2005-07" db="EMBL/GenBank/DDBJ databases">
        <authorList>
            <person name="Mural R.J."/>
            <person name="Istrail S."/>
            <person name="Sutton G.G."/>
            <person name="Florea L."/>
            <person name="Halpern A.L."/>
            <person name="Mobarry C.M."/>
            <person name="Lippert R."/>
            <person name="Walenz B."/>
            <person name="Shatkay H."/>
            <person name="Dew I."/>
            <person name="Miller J.R."/>
            <person name="Flanigan M.J."/>
            <person name="Edwards N.J."/>
            <person name="Bolanos R."/>
            <person name="Fasulo D."/>
            <person name="Halldorsson B.V."/>
            <person name="Hannenhalli S."/>
            <person name="Turner R."/>
            <person name="Yooseph S."/>
            <person name="Lu F."/>
            <person name="Nusskern D.R."/>
            <person name="Shue B.C."/>
            <person name="Zheng X.H."/>
            <person name="Zhong F."/>
            <person name="Delcher A.L."/>
            <person name="Huson D.H."/>
            <person name="Kravitz S.A."/>
            <person name="Mouchard L."/>
            <person name="Reinert K."/>
            <person name="Remington K.A."/>
            <person name="Clark A.G."/>
            <person name="Waterman M.S."/>
            <person name="Eichler E.E."/>
            <person name="Adams M.D."/>
            <person name="Hunkapiller M.W."/>
            <person name="Myers E.W."/>
            <person name="Venter J.C."/>
        </authorList>
    </citation>
    <scope>NUCLEOTIDE SEQUENCE [LARGE SCALE GENOMIC DNA]</scope>
</reference>
<reference key="3">
    <citation type="journal article" date="2004" name="Genome Res.">
        <title>The status, quality, and expansion of the NIH full-length cDNA project: the Mammalian Gene Collection (MGC).</title>
        <authorList>
            <consortium name="The MGC Project Team"/>
        </authorList>
    </citation>
    <scope>NUCLEOTIDE SEQUENCE [LARGE SCALE MRNA] (ISOFORM 1)</scope>
    <source>
        <tissue>Testis</tissue>
    </source>
</reference>
<reference key="4">
    <citation type="journal article" date="2000" name="J. Gen. Virol.">
        <title>Cloning and epitope mapping of a functional partial fusion receptor for human cytomegalovirus gH.</title>
        <authorList>
            <person name="Baldwin B.R."/>
            <person name="Zhang C.-O."/>
            <person name="Keay S."/>
        </authorList>
    </citation>
    <scope>NUCLEOTIDE SEQUENCE [MRNA] OF 21-205</scope>
    <scope>POSSIBLE FUNCTION FOR FUSION WITH HCMV (MICROBIAL INFECTION)</scope>
    <source>
        <tissue>Lung</tissue>
    </source>
</reference>
<reference key="5">
    <citation type="journal article" date="2008" name="Proc. Natl. Acad. Sci. U.S.A.">
        <title>A quantitative atlas of mitotic phosphorylation.</title>
        <authorList>
            <person name="Dephoure N."/>
            <person name="Zhou C."/>
            <person name="Villen J."/>
            <person name="Beausoleil S.A."/>
            <person name="Bakalarski C.E."/>
            <person name="Elledge S.J."/>
            <person name="Gygi S.P."/>
        </authorList>
    </citation>
    <scope>IDENTIFICATION BY MASS SPECTROMETRY [LARGE SCALE ANALYSIS]</scope>
    <source>
        <tissue>Cervix carcinoma</tissue>
    </source>
</reference>
<reference key="6">
    <citation type="journal article" date="2009" name="Sci. Signal.">
        <title>Quantitative phosphoproteomic analysis of T cell receptor signaling reveals system-wide modulation of protein-protein interactions.</title>
        <authorList>
            <person name="Mayya V."/>
            <person name="Lundgren D.H."/>
            <person name="Hwang S.-I."/>
            <person name="Rezaul K."/>
            <person name="Wu L."/>
            <person name="Eng J.K."/>
            <person name="Rodionov V."/>
            <person name="Han D.K."/>
        </authorList>
    </citation>
    <scope>IDENTIFICATION BY MASS SPECTROMETRY [LARGE SCALE ANALYSIS]</scope>
    <source>
        <tissue>Leukemic T-cell</tissue>
    </source>
</reference>
<reference key="7">
    <citation type="journal article" date="2012" name="Proc. Natl. Acad. Sci. U.S.A.">
        <title>N-terminal acetylome analyses and functional insights of the N-terminal acetyltransferase NatB.</title>
        <authorList>
            <person name="Van Damme P."/>
            <person name="Lasa M."/>
            <person name="Polevoda B."/>
            <person name="Gazquez C."/>
            <person name="Elosegui-Artola A."/>
            <person name="Kim D.S."/>
            <person name="De Juan-Pardo E."/>
            <person name="Demeyer K."/>
            <person name="Hole K."/>
            <person name="Larrea E."/>
            <person name="Timmerman E."/>
            <person name="Prieto J."/>
            <person name="Arnesen T."/>
            <person name="Sherman F."/>
            <person name="Gevaert K."/>
            <person name="Aldabe R."/>
        </authorList>
    </citation>
    <scope>ACETYLATION [LARGE SCALE ANALYSIS] AT ALA-2</scope>
    <scope>CLEAVAGE OF INITIATOR METHIONINE [LARGE SCALE ANALYSIS]</scope>
    <scope>IDENTIFICATION BY MASS SPECTROMETRY [LARGE SCALE ANALYSIS]</scope>
</reference>
<reference key="8">
    <citation type="journal article" date="2014" name="J. Proteomics">
        <title>An enzyme assisted RP-RPLC approach for in-depth analysis of human liver phosphoproteome.</title>
        <authorList>
            <person name="Bian Y."/>
            <person name="Song C."/>
            <person name="Cheng K."/>
            <person name="Dong M."/>
            <person name="Wang F."/>
            <person name="Huang J."/>
            <person name="Sun D."/>
            <person name="Wang L."/>
            <person name="Ye M."/>
            <person name="Zou H."/>
        </authorList>
    </citation>
    <scope>PHOSPHORYLATION [LARGE SCALE ANALYSIS] AT SER-523</scope>
    <scope>IDENTIFICATION BY MASS SPECTROMETRY [LARGE SCALE ANALYSIS]</scope>
    <source>
        <tissue>Liver</tissue>
    </source>
</reference>
<reference key="9">
    <citation type="journal article" date="2015" name="Am. J. Hum. Genet.">
        <title>Genetic Defects in TAPT1 Disrupt Ciliogenesis and Cause a Complex Lethal Osteochondrodysplasia.</title>
        <authorList>
            <person name="Symoens S."/>
            <person name="Barnes A.M."/>
            <person name="Gistelinck C."/>
            <person name="Malfait F."/>
            <person name="Guillemyn B."/>
            <person name="Steyaert W."/>
            <person name="Syx D."/>
            <person name="D'hondt S."/>
            <person name="Biervliet M."/>
            <person name="De Backer J."/>
            <person name="Witten E.P."/>
            <person name="Leikin S."/>
            <person name="Makareeva E."/>
            <person name="Gillessen-Kaesbach G."/>
            <person name="Huysseune A."/>
            <person name="Vleminckx K."/>
            <person name="Willaert A."/>
            <person name="De Paepe A."/>
            <person name="Marini J.C."/>
            <person name="Coucke P.J."/>
        </authorList>
    </citation>
    <scope>VARIANT OCLSBG VAL-353</scope>
    <scope>CHARACTERIZATION OF VARIANT OCLSBG VAL-353</scope>
    <scope>FUNCTION</scope>
    <scope>SUBCELLULAR LOCATION</scope>
</reference>
<protein>
    <recommendedName>
        <fullName>Transmembrane anterior posterior transformation protein 1 homolog</fullName>
    </recommendedName>
    <alternativeName>
        <fullName>Cytomegalovirus partial fusion receptor</fullName>
    </alternativeName>
</protein>
<gene>
    <name type="primary">TAPT1</name>
    <name type="synonym">CMVFR</name>
</gene>
<comment type="function">
    <text evidence="1 2 6">Plays a role in primary cilia formation (PubMed:26365339). May act as a downstream effector of HOXC8 possibly by transducing or transmitting extracellular information required for axial skeletal patterning during development (By similarity). May be involved in cartilage and bone development (By similarity). May play a role in the differentiation of cranial neural crest cells (By similarity).</text>
</comment>
<comment type="function">
    <text evidence="5">(Microbial infection) In case of infection, may act as a fusion receptor for cytomegalovirus (HCMV) strain AD169.</text>
</comment>
<comment type="subcellular location">
    <subcellularLocation>
        <location evidence="6">Cytoplasm</location>
        <location evidence="6">Cytoskeleton</location>
        <location evidence="6">Microtubule organizing center</location>
        <location evidence="6">Centrosome</location>
    </subcellularLocation>
    <subcellularLocation>
        <location evidence="6">Cytoplasm</location>
        <location evidence="6">Cytoskeleton</location>
        <location evidence="6">Cilium basal body</location>
    </subcellularLocation>
    <subcellularLocation>
        <location evidence="8">Membrane</location>
        <topology evidence="8">Multi-pass membrane protein</topology>
    </subcellularLocation>
</comment>
<comment type="alternative products">
    <event type="alternative splicing"/>
    <isoform>
        <id>Q6NXT6-1</id>
        <name>1</name>
        <sequence type="displayed"/>
    </isoform>
    <isoform>
        <id>Q6NXT6-2</id>
        <name>2</name>
        <sequence type="described" ref="VSP_032842"/>
    </isoform>
</comment>
<comment type="disease" evidence="6">
    <disease id="DI-04702">
        <name>Osteochondrodysplasia, complex lethal, Symoens-Barnes-Gistelinck type</name>
        <acronym>OCLSBG</acronym>
        <description>An autosomal recessive, lethal syndrome characterized by severe hypomineralization of the entire skeleton, severe osteopenia, microcephaly, multiple intra-uterine fractures, and multiple congenital developmental anomalies affecting the brain, lungs, and kidneys.</description>
        <dbReference type="MIM" id="616897"/>
    </disease>
    <text>The disease is caused by variants affecting the gene represented in this entry.</text>
</comment>
<comment type="similarity">
    <text evidence="8">Belongs to the TAPT1 family.</text>
</comment>
<comment type="sequence caution" evidence="8">
    <conflict type="frameshift">
        <sequence resource="EMBL-CDS" id="AAF28308"/>
    </conflict>
</comment>
<dbReference type="EMBL" id="AK074494">
    <property type="protein sequence ID" value="BAC11022.1"/>
    <property type="molecule type" value="mRNA"/>
</dbReference>
<dbReference type="EMBL" id="CH471069">
    <property type="protein sequence ID" value="EAW92754.1"/>
    <property type="molecule type" value="Genomic_DNA"/>
</dbReference>
<dbReference type="EMBL" id="BC066899">
    <property type="protein sequence ID" value="AAH66899.1"/>
    <property type="molecule type" value="mRNA"/>
</dbReference>
<dbReference type="EMBL" id="AF189251">
    <property type="protein sequence ID" value="AAF28308.1"/>
    <property type="status" value="ALT_FRAME"/>
    <property type="molecule type" value="mRNA"/>
</dbReference>
<dbReference type="CCDS" id="CCDS47030.1">
    <molecule id="Q6NXT6-1"/>
</dbReference>
<dbReference type="RefSeq" id="NP_699196.2">
    <molecule id="Q6NXT6-1"/>
    <property type="nucleotide sequence ID" value="NM_153365.3"/>
</dbReference>
<dbReference type="SMR" id="Q6NXT6"/>
<dbReference type="BioGRID" id="128412">
    <property type="interactions" value="53"/>
</dbReference>
<dbReference type="FunCoup" id="Q6NXT6">
    <property type="interactions" value="2133"/>
</dbReference>
<dbReference type="IntAct" id="Q6NXT6">
    <property type="interactions" value="11"/>
</dbReference>
<dbReference type="STRING" id="9606.ENSP00000385347"/>
<dbReference type="BindingDB" id="Q6NXT6"/>
<dbReference type="DrugBank" id="DB06391">
    <property type="generic name" value="T611"/>
</dbReference>
<dbReference type="iPTMnet" id="Q6NXT6"/>
<dbReference type="PhosphoSitePlus" id="Q6NXT6"/>
<dbReference type="SwissPalm" id="Q6NXT6"/>
<dbReference type="BioMuta" id="TAPT1"/>
<dbReference type="DMDM" id="74737002"/>
<dbReference type="jPOST" id="Q6NXT6"/>
<dbReference type="MassIVE" id="Q6NXT6"/>
<dbReference type="PaxDb" id="9606-ENSP00000385347"/>
<dbReference type="PeptideAtlas" id="Q6NXT6"/>
<dbReference type="ProteomicsDB" id="66775">
    <molecule id="Q6NXT6-1"/>
</dbReference>
<dbReference type="ProteomicsDB" id="66776">
    <molecule id="Q6NXT6-2"/>
</dbReference>
<dbReference type="Pumba" id="Q6NXT6"/>
<dbReference type="Antibodypedia" id="54863">
    <property type="antibodies" value="85 antibodies from 19 providers"/>
</dbReference>
<dbReference type="DNASU" id="202018"/>
<dbReference type="Ensembl" id="ENST00000405303.7">
    <molecule id="Q6NXT6-1"/>
    <property type="protein sequence ID" value="ENSP00000385347.2"/>
    <property type="gene ID" value="ENSG00000169762.17"/>
</dbReference>
<dbReference type="GeneID" id="202018"/>
<dbReference type="KEGG" id="hsa:202018"/>
<dbReference type="MANE-Select" id="ENST00000405303.7">
    <property type="protein sequence ID" value="ENSP00000385347.2"/>
    <property type="RefSeq nucleotide sequence ID" value="NM_153365.3"/>
    <property type="RefSeq protein sequence ID" value="NP_699196.2"/>
</dbReference>
<dbReference type="UCSC" id="uc010ied.2">
    <molecule id="Q6NXT6-1"/>
    <property type="organism name" value="human"/>
</dbReference>
<dbReference type="AGR" id="HGNC:26887"/>
<dbReference type="CTD" id="202018"/>
<dbReference type="DisGeNET" id="202018"/>
<dbReference type="GeneCards" id="TAPT1"/>
<dbReference type="HGNC" id="HGNC:26887">
    <property type="gene designation" value="TAPT1"/>
</dbReference>
<dbReference type="HPA" id="ENSG00000169762">
    <property type="expression patterns" value="Low tissue specificity"/>
</dbReference>
<dbReference type="MalaCards" id="TAPT1"/>
<dbReference type="MIM" id="612758">
    <property type="type" value="gene"/>
</dbReference>
<dbReference type="MIM" id="616897">
    <property type="type" value="phenotype"/>
</dbReference>
<dbReference type="neXtProt" id="NX_Q6NXT6"/>
<dbReference type="OpenTargets" id="ENSG00000169762"/>
<dbReference type="Orphanet" id="457378">
    <property type="disease" value="Complex lethal osteochondrodysplasia"/>
</dbReference>
<dbReference type="PharmGKB" id="PA162405167"/>
<dbReference type="VEuPathDB" id="HostDB:ENSG00000169762"/>
<dbReference type="eggNOG" id="KOG2490">
    <property type="taxonomic scope" value="Eukaryota"/>
</dbReference>
<dbReference type="GeneTree" id="ENSGT00390000010628"/>
<dbReference type="HOGENOM" id="CLU_003655_3_0_1"/>
<dbReference type="InParanoid" id="Q6NXT6"/>
<dbReference type="OMA" id="TIMLIRV"/>
<dbReference type="OrthoDB" id="29023at2759"/>
<dbReference type="PAN-GO" id="Q6NXT6">
    <property type="GO annotations" value="4 GO annotations based on evolutionary models"/>
</dbReference>
<dbReference type="PhylomeDB" id="Q6NXT6"/>
<dbReference type="TreeFam" id="TF105962"/>
<dbReference type="PathwayCommons" id="Q6NXT6"/>
<dbReference type="SignaLink" id="Q6NXT6"/>
<dbReference type="BioGRID-ORCS" id="202018">
    <property type="hits" value="93 hits in 1177 CRISPR screens"/>
</dbReference>
<dbReference type="ChiTaRS" id="TAPT1">
    <property type="organism name" value="human"/>
</dbReference>
<dbReference type="GenomeRNAi" id="202018"/>
<dbReference type="Pharos" id="Q6NXT6">
    <property type="development level" value="Tbio"/>
</dbReference>
<dbReference type="PRO" id="PR:Q6NXT6"/>
<dbReference type="Proteomes" id="UP000005640">
    <property type="component" value="Chromosome 4"/>
</dbReference>
<dbReference type="RNAct" id="Q6NXT6">
    <property type="molecule type" value="protein"/>
</dbReference>
<dbReference type="Bgee" id="ENSG00000169762">
    <property type="expression patterns" value="Expressed in secondary oocyte and 187 other cell types or tissues"/>
</dbReference>
<dbReference type="ExpressionAtlas" id="Q6NXT6">
    <property type="expression patterns" value="baseline and differential"/>
</dbReference>
<dbReference type="GO" id="GO:0005813">
    <property type="term" value="C:centrosome"/>
    <property type="evidence" value="ECO:0000314"/>
    <property type="project" value="HPA"/>
</dbReference>
<dbReference type="GO" id="GO:0036064">
    <property type="term" value="C:ciliary basal body"/>
    <property type="evidence" value="ECO:0000314"/>
    <property type="project" value="HPA"/>
</dbReference>
<dbReference type="GO" id="GO:0005829">
    <property type="term" value="C:cytosol"/>
    <property type="evidence" value="ECO:0000314"/>
    <property type="project" value="HPA"/>
</dbReference>
<dbReference type="GO" id="GO:0005789">
    <property type="term" value="C:endoplasmic reticulum membrane"/>
    <property type="evidence" value="ECO:0000318"/>
    <property type="project" value="GO_Central"/>
</dbReference>
<dbReference type="GO" id="GO:0016020">
    <property type="term" value="C:membrane"/>
    <property type="evidence" value="ECO:0000304"/>
    <property type="project" value="UniProtKB"/>
</dbReference>
<dbReference type="GO" id="GO:0005654">
    <property type="term" value="C:nucleoplasm"/>
    <property type="evidence" value="ECO:0000314"/>
    <property type="project" value="HPA"/>
</dbReference>
<dbReference type="GO" id="GO:0016520">
    <property type="term" value="F:growth hormone-releasing hormone receptor activity"/>
    <property type="evidence" value="ECO:0000304"/>
    <property type="project" value="UniProtKB"/>
</dbReference>
<dbReference type="GO" id="GO:0051216">
    <property type="term" value="P:cartilage development"/>
    <property type="evidence" value="ECO:0007669"/>
    <property type="project" value="UniProtKB-KW"/>
</dbReference>
<dbReference type="GO" id="GO:0030030">
    <property type="term" value="P:cell projection organization"/>
    <property type="evidence" value="ECO:0007669"/>
    <property type="project" value="UniProtKB-KW"/>
</dbReference>
<dbReference type="GO" id="GO:0048706">
    <property type="term" value="P:embryonic skeletal system development"/>
    <property type="evidence" value="ECO:0007669"/>
    <property type="project" value="Ensembl"/>
</dbReference>
<dbReference type="GO" id="GO:0014032">
    <property type="term" value="P:neural crest cell development"/>
    <property type="evidence" value="ECO:0000250"/>
    <property type="project" value="UniProtKB"/>
</dbReference>
<dbReference type="GO" id="GO:0001503">
    <property type="term" value="P:ossification"/>
    <property type="evidence" value="ECO:0007669"/>
    <property type="project" value="UniProtKB-KW"/>
</dbReference>
<dbReference type="GO" id="GO:1903012">
    <property type="term" value="P:positive regulation of bone development"/>
    <property type="evidence" value="ECO:0000250"/>
    <property type="project" value="UniProtKB"/>
</dbReference>
<dbReference type="GO" id="GO:0061036">
    <property type="term" value="P:positive regulation of cartilage development"/>
    <property type="evidence" value="ECO:0000250"/>
    <property type="project" value="UniProtKB"/>
</dbReference>
<dbReference type="GO" id="GO:0045724">
    <property type="term" value="P:positive regulation of cilium assembly"/>
    <property type="evidence" value="ECO:0000314"/>
    <property type="project" value="UniProtKB"/>
</dbReference>
<dbReference type="InterPro" id="IPR008010">
    <property type="entry name" value="Tatp1"/>
</dbReference>
<dbReference type="PANTHER" id="PTHR13317">
    <property type="entry name" value="TRANSMEMBRANE ANTERIOR POSTERIOR TRANSFORMATION PROTEIN 1 HOMOLOG"/>
    <property type="match status" value="1"/>
</dbReference>
<dbReference type="PANTHER" id="PTHR13317:SF4">
    <property type="entry name" value="TRANSMEMBRANE ANTERIOR POSTERIOR TRANSFORMATION PROTEIN 1 HOMOLOG"/>
    <property type="match status" value="1"/>
</dbReference>
<dbReference type="Pfam" id="PF05346">
    <property type="entry name" value="DUF747"/>
    <property type="match status" value="1"/>
</dbReference>
<name>TAPT1_HUMAN</name>
<feature type="initiator methionine" description="Removed" evidence="9">
    <location>
        <position position="1"/>
    </location>
</feature>
<feature type="chain" id="PRO_0000328872" description="Transmembrane anterior posterior transformation protein 1 homolog">
    <location>
        <begin position="2"/>
        <end position="567"/>
    </location>
</feature>
<feature type="transmembrane region" description="Helical" evidence="3">
    <location>
        <begin position="111"/>
        <end position="131"/>
    </location>
</feature>
<feature type="transmembrane region" description="Helical" evidence="3">
    <location>
        <begin position="157"/>
        <end position="179"/>
    </location>
</feature>
<feature type="transmembrane region" description="Helical" evidence="3">
    <location>
        <begin position="236"/>
        <end position="256"/>
    </location>
</feature>
<feature type="transmembrane region" description="Helical" evidence="3">
    <location>
        <begin position="403"/>
        <end position="423"/>
    </location>
</feature>
<feature type="transmembrane region" description="Helical" evidence="3">
    <location>
        <begin position="432"/>
        <end position="452"/>
    </location>
</feature>
<feature type="region of interest" description="Disordered" evidence="4">
    <location>
        <begin position="1"/>
        <end position="60"/>
    </location>
</feature>
<feature type="region of interest" description="Disordered" evidence="4">
    <location>
        <begin position="466"/>
        <end position="499"/>
    </location>
</feature>
<feature type="compositionally biased region" description="Low complexity" evidence="4">
    <location>
        <begin position="1"/>
        <end position="10"/>
    </location>
</feature>
<feature type="compositionally biased region" description="Polar residues" evidence="4">
    <location>
        <begin position="478"/>
        <end position="499"/>
    </location>
</feature>
<feature type="modified residue" description="N-acetylalanine" evidence="9">
    <location>
        <position position="2"/>
    </location>
</feature>
<feature type="modified residue" description="Phosphoserine" evidence="10">
    <location>
        <position position="523"/>
    </location>
</feature>
<feature type="modified residue" description="Phosphothreonine" evidence="2">
    <location>
        <position position="529"/>
    </location>
</feature>
<feature type="splice variant" id="VSP_032842" description="In isoform 2." evidence="7">
    <original>KDLLEIDRFTICGNRID</original>
    <variation>SVLLCQSGLPEC</variation>
    <location>
        <begin position="551"/>
        <end position="567"/>
    </location>
</feature>
<feature type="sequence variant" id="VAR_076497" description="In OCLSBG; causes mislocalization of the protein in the cytoplasm; impairs cilium formation; dbSNP:rs869312980." evidence="6">
    <original>D</original>
    <variation>V</variation>
    <location>
        <position position="353"/>
    </location>
</feature>
<feature type="sequence variant" id="VAR_042568" description="In dbSNP:rs35606284.">
    <original>E</original>
    <variation>K</variation>
    <location>
        <position position="465"/>
    </location>
</feature>
<feature type="sequence variant" id="VAR_042569" description="In dbSNP:rs16893137.">
    <original>N</original>
    <variation>S</variation>
    <location>
        <position position="522"/>
    </location>
</feature>
<feature type="sequence conflict" description="In Ref. 1; BAC11022." evidence="8" ref="1">
    <original>E</original>
    <variation>D</variation>
    <location>
        <position position="30"/>
    </location>
</feature>